<organism>
    <name type="scientific">Glaesserella parasuis serovar 5 (strain SH0165)</name>
    <name type="common">Haemophilus parasuis</name>
    <dbReference type="NCBI Taxonomy" id="557723"/>
    <lineage>
        <taxon>Bacteria</taxon>
        <taxon>Pseudomonadati</taxon>
        <taxon>Pseudomonadota</taxon>
        <taxon>Gammaproteobacteria</taxon>
        <taxon>Pasteurellales</taxon>
        <taxon>Pasteurellaceae</taxon>
        <taxon>Glaesserella</taxon>
    </lineage>
</organism>
<reference key="1">
    <citation type="journal article" date="2009" name="J. Bacteriol.">
        <title>Complete genome sequence of Haemophilus parasuis SH0165.</title>
        <authorList>
            <person name="Yue M."/>
            <person name="Yang F."/>
            <person name="Yang J."/>
            <person name="Bei W."/>
            <person name="Cai X."/>
            <person name="Chen L."/>
            <person name="Dong J."/>
            <person name="Zhou R."/>
            <person name="Jin M."/>
            <person name="Jin Q."/>
            <person name="Chen H."/>
        </authorList>
    </citation>
    <scope>NUCLEOTIDE SEQUENCE [LARGE SCALE GENOMIC DNA]</scope>
    <source>
        <strain>SH0165</strain>
    </source>
</reference>
<keyword id="KW-0067">ATP-binding</keyword>
<keyword id="KW-0133">Cell shape</keyword>
<keyword id="KW-0961">Cell wall biogenesis/degradation</keyword>
<keyword id="KW-0963">Cytoplasm</keyword>
<keyword id="KW-0436">Ligase</keyword>
<keyword id="KW-0460">Magnesium</keyword>
<keyword id="KW-0464">Manganese</keyword>
<keyword id="KW-0479">Metal-binding</keyword>
<keyword id="KW-0547">Nucleotide-binding</keyword>
<keyword id="KW-0573">Peptidoglycan synthesis</keyword>
<keyword id="KW-1185">Reference proteome</keyword>
<comment type="function">
    <text evidence="2">Cell wall formation.</text>
</comment>
<comment type="catalytic activity">
    <reaction evidence="2">
        <text>2 D-alanine + ATP = D-alanyl-D-alanine + ADP + phosphate + H(+)</text>
        <dbReference type="Rhea" id="RHEA:11224"/>
        <dbReference type="ChEBI" id="CHEBI:15378"/>
        <dbReference type="ChEBI" id="CHEBI:30616"/>
        <dbReference type="ChEBI" id="CHEBI:43474"/>
        <dbReference type="ChEBI" id="CHEBI:57416"/>
        <dbReference type="ChEBI" id="CHEBI:57822"/>
        <dbReference type="ChEBI" id="CHEBI:456216"/>
        <dbReference type="EC" id="6.3.2.4"/>
    </reaction>
</comment>
<comment type="cofactor">
    <cofactor evidence="1">
        <name>Mg(2+)</name>
        <dbReference type="ChEBI" id="CHEBI:18420"/>
    </cofactor>
    <cofactor evidence="1">
        <name>Mn(2+)</name>
        <dbReference type="ChEBI" id="CHEBI:29035"/>
    </cofactor>
    <text evidence="1">Binds 2 magnesium or manganese ions per subunit.</text>
</comment>
<comment type="pathway">
    <text evidence="2">Cell wall biogenesis; peptidoglycan biosynthesis.</text>
</comment>
<comment type="subcellular location">
    <subcellularLocation>
        <location evidence="2">Cytoplasm</location>
    </subcellularLocation>
</comment>
<comment type="similarity">
    <text evidence="2">Belongs to the D-alanine--D-alanine ligase family.</text>
</comment>
<sequence>MSLKNEKIAVLFGGVSAEREISLNSGKSVFEALQSLGYNVEAIDTKEFPIEKLKEKGIQRVFNILHGGIGENGVLQGALEQLGIPYTGCGVMASAITLDKFRTKLLWNAVGLPTAAMEVVRRGQAVNSDEIIAKLGLPLFVKPASEGSSVGVSKVKTAEQLLPAIEEALKYDSIVLVEENLAGAEYSVPVLDGEVLPAVQIIPDGEFYDYHAKYISDNTQYVVPALNADRQAEVAKLVKQAYDVVGCRGWSRIDVMEDGEGNFRLVEVNTCPGMTSHSIFPKSAATVGYSFERLVERVLELSA</sequence>
<accession>B8F3B8</accession>
<evidence type="ECO:0000250" key="1"/>
<evidence type="ECO:0000255" key="2">
    <source>
        <dbReference type="HAMAP-Rule" id="MF_00047"/>
    </source>
</evidence>
<feature type="chain" id="PRO_1000189737" description="D-alanine--D-alanine ligase">
    <location>
        <begin position="1"/>
        <end position="303"/>
    </location>
</feature>
<feature type="domain" description="ATP-grasp" evidence="2">
    <location>
        <begin position="104"/>
        <end position="300"/>
    </location>
</feature>
<feature type="binding site" evidence="2">
    <location>
        <begin position="132"/>
        <end position="187"/>
    </location>
    <ligand>
        <name>ATP</name>
        <dbReference type="ChEBI" id="CHEBI:30616"/>
    </ligand>
</feature>
<feature type="binding site" evidence="2">
    <location>
        <position position="254"/>
    </location>
    <ligand>
        <name>Mg(2+)</name>
        <dbReference type="ChEBI" id="CHEBI:18420"/>
        <label>1</label>
    </ligand>
</feature>
<feature type="binding site" evidence="2">
    <location>
        <position position="267"/>
    </location>
    <ligand>
        <name>Mg(2+)</name>
        <dbReference type="ChEBI" id="CHEBI:18420"/>
        <label>1</label>
    </ligand>
</feature>
<feature type="binding site" evidence="2">
    <location>
        <position position="267"/>
    </location>
    <ligand>
        <name>Mg(2+)</name>
        <dbReference type="ChEBI" id="CHEBI:18420"/>
        <label>2</label>
    </ligand>
</feature>
<feature type="binding site" evidence="2">
    <location>
        <position position="269"/>
    </location>
    <ligand>
        <name>Mg(2+)</name>
        <dbReference type="ChEBI" id="CHEBI:18420"/>
        <label>2</label>
    </ligand>
</feature>
<proteinExistence type="inferred from homology"/>
<gene>
    <name evidence="2" type="primary">ddl</name>
    <name type="ordered locus">HAPS_0121</name>
</gene>
<protein>
    <recommendedName>
        <fullName evidence="2">D-alanine--D-alanine ligase</fullName>
        <ecNumber evidence="2">6.3.2.4</ecNumber>
    </recommendedName>
    <alternativeName>
        <fullName evidence="2">D-Ala-D-Ala ligase</fullName>
    </alternativeName>
    <alternativeName>
        <fullName evidence="2">D-alanylalanine synthetase</fullName>
    </alternativeName>
</protein>
<dbReference type="EC" id="6.3.2.4" evidence="2"/>
<dbReference type="EMBL" id="CP001321">
    <property type="protein sequence ID" value="ACL31820.1"/>
    <property type="molecule type" value="Genomic_DNA"/>
</dbReference>
<dbReference type="RefSeq" id="WP_005711197.1">
    <property type="nucleotide sequence ID" value="NC_011852.1"/>
</dbReference>
<dbReference type="SMR" id="B8F3B8"/>
<dbReference type="STRING" id="557723.HAPS_0121"/>
<dbReference type="KEGG" id="hap:HAPS_0121"/>
<dbReference type="HOGENOM" id="CLU_039268_1_2_6"/>
<dbReference type="UniPathway" id="UPA00219"/>
<dbReference type="Proteomes" id="UP000006743">
    <property type="component" value="Chromosome"/>
</dbReference>
<dbReference type="GO" id="GO:0005829">
    <property type="term" value="C:cytosol"/>
    <property type="evidence" value="ECO:0007669"/>
    <property type="project" value="TreeGrafter"/>
</dbReference>
<dbReference type="GO" id="GO:0005524">
    <property type="term" value="F:ATP binding"/>
    <property type="evidence" value="ECO:0007669"/>
    <property type="project" value="UniProtKB-KW"/>
</dbReference>
<dbReference type="GO" id="GO:0008716">
    <property type="term" value="F:D-alanine-D-alanine ligase activity"/>
    <property type="evidence" value="ECO:0007669"/>
    <property type="project" value="UniProtKB-UniRule"/>
</dbReference>
<dbReference type="GO" id="GO:0046872">
    <property type="term" value="F:metal ion binding"/>
    <property type="evidence" value="ECO:0007669"/>
    <property type="project" value="UniProtKB-KW"/>
</dbReference>
<dbReference type="GO" id="GO:0071555">
    <property type="term" value="P:cell wall organization"/>
    <property type="evidence" value="ECO:0007669"/>
    <property type="project" value="UniProtKB-KW"/>
</dbReference>
<dbReference type="GO" id="GO:0009252">
    <property type="term" value="P:peptidoglycan biosynthetic process"/>
    <property type="evidence" value="ECO:0007669"/>
    <property type="project" value="UniProtKB-UniRule"/>
</dbReference>
<dbReference type="GO" id="GO:0008360">
    <property type="term" value="P:regulation of cell shape"/>
    <property type="evidence" value="ECO:0007669"/>
    <property type="project" value="UniProtKB-KW"/>
</dbReference>
<dbReference type="FunFam" id="3.30.1490.20:FF:000007">
    <property type="entry name" value="D-alanine--D-alanine ligase"/>
    <property type="match status" value="1"/>
</dbReference>
<dbReference type="FunFam" id="3.30.470.20:FF:000008">
    <property type="entry name" value="D-alanine--D-alanine ligase"/>
    <property type="match status" value="1"/>
</dbReference>
<dbReference type="FunFam" id="3.40.50.20:FF:000013">
    <property type="entry name" value="D-alanine--D-alanine ligase"/>
    <property type="match status" value="1"/>
</dbReference>
<dbReference type="Gene3D" id="3.40.50.20">
    <property type="match status" value="1"/>
</dbReference>
<dbReference type="Gene3D" id="3.30.1490.20">
    <property type="entry name" value="ATP-grasp fold, A domain"/>
    <property type="match status" value="1"/>
</dbReference>
<dbReference type="Gene3D" id="3.30.470.20">
    <property type="entry name" value="ATP-grasp fold, B domain"/>
    <property type="match status" value="1"/>
</dbReference>
<dbReference type="HAMAP" id="MF_00047">
    <property type="entry name" value="Dala_Dala_lig"/>
    <property type="match status" value="1"/>
</dbReference>
<dbReference type="InterPro" id="IPR011761">
    <property type="entry name" value="ATP-grasp"/>
</dbReference>
<dbReference type="InterPro" id="IPR013815">
    <property type="entry name" value="ATP_grasp_subdomain_1"/>
</dbReference>
<dbReference type="InterPro" id="IPR000291">
    <property type="entry name" value="D-Ala_lig_Van_CS"/>
</dbReference>
<dbReference type="InterPro" id="IPR005905">
    <property type="entry name" value="D_ala_D_ala"/>
</dbReference>
<dbReference type="InterPro" id="IPR011095">
    <property type="entry name" value="Dala_Dala_lig_C"/>
</dbReference>
<dbReference type="InterPro" id="IPR011127">
    <property type="entry name" value="Dala_Dala_lig_N"/>
</dbReference>
<dbReference type="InterPro" id="IPR016185">
    <property type="entry name" value="PreATP-grasp_dom_sf"/>
</dbReference>
<dbReference type="NCBIfam" id="TIGR01205">
    <property type="entry name" value="D_ala_D_alaTIGR"/>
    <property type="match status" value="1"/>
</dbReference>
<dbReference type="NCBIfam" id="NF002378">
    <property type="entry name" value="PRK01372.1"/>
    <property type="match status" value="1"/>
</dbReference>
<dbReference type="PANTHER" id="PTHR23132">
    <property type="entry name" value="D-ALANINE--D-ALANINE LIGASE"/>
    <property type="match status" value="1"/>
</dbReference>
<dbReference type="PANTHER" id="PTHR23132:SF23">
    <property type="entry name" value="D-ALANINE--D-ALANINE LIGASE B"/>
    <property type="match status" value="1"/>
</dbReference>
<dbReference type="Pfam" id="PF07478">
    <property type="entry name" value="Dala_Dala_lig_C"/>
    <property type="match status" value="1"/>
</dbReference>
<dbReference type="Pfam" id="PF01820">
    <property type="entry name" value="Dala_Dala_lig_N"/>
    <property type="match status" value="2"/>
</dbReference>
<dbReference type="PIRSF" id="PIRSF039102">
    <property type="entry name" value="Ddl/VanB"/>
    <property type="match status" value="1"/>
</dbReference>
<dbReference type="SUPFAM" id="SSF56059">
    <property type="entry name" value="Glutathione synthetase ATP-binding domain-like"/>
    <property type="match status" value="1"/>
</dbReference>
<dbReference type="SUPFAM" id="SSF52440">
    <property type="entry name" value="PreATP-grasp domain"/>
    <property type="match status" value="1"/>
</dbReference>
<dbReference type="PROSITE" id="PS50975">
    <property type="entry name" value="ATP_GRASP"/>
    <property type="match status" value="1"/>
</dbReference>
<dbReference type="PROSITE" id="PS00843">
    <property type="entry name" value="DALA_DALA_LIGASE_1"/>
    <property type="match status" value="1"/>
</dbReference>
<dbReference type="PROSITE" id="PS00844">
    <property type="entry name" value="DALA_DALA_LIGASE_2"/>
    <property type="match status" value="1"/>
</dbReference>
<name>DDL_GLAP5</name>